<keyword id="KW-0963">Cytoplasm</keyword>
<keyword id="KW-0479">Metal-binding</keyword>
<keyword id="KW-0520">NAD</keyword>
<keyword id="KW-0808">Transferase</keyword>
<keyword id="KW-0862">Zinc</keyword>
<name>NPD1_MYCA1</name>
<protein>
    <recommendedName>
        <fullName evidence="1">NAD-dependent protein deacetylase 1</fullName>
        <ecNumber evidence="1 2">2.3.1.286</ecNumber>
    </recommendedName>
    <alternativeName>
        <fullName evidence="1">Regulatory protein SIR2 homolog 1</fullName>
    </alternativeName>
</protein>
<comment type="function">
    <text evidence="1">NAD-dependent protein deacetylase which modulates the activities of several enzymes which are inactive in their acetylated form.</text>
</comment>
<comment type="catalytic activity">
    <reaction evidence="1">
        <text>N(6)-acetyl-L-lysyl-[protein] + NAD(+) + H2O = 2''-O-acetyl-ADP-D-ribose + nicotinamide + L-lysyl-[protein]</text>
        <dbReference type="Rhea" id="RHEA:43636"/>
        <dbReference type="Rhea" id="RHEA-COMP:9752"/>
        <dbReference type="Rhea" id="RHEA-COMP:10731"/>
        <dbReference type="ChEBI" id="CHEBI:15377"/>
        <dbReference type="ChEBI" id="CHEBI:17154"/>
        <dbReference type="ChEBI" id="CHEBI:29969"/>
        <dbReference type="ChEBI" id="CHEBI:57540"/>
        <dbReference type="ChEBI" id="CHEBI:61930"/>
        <dbReference type="ChEBI" id="CHEBI:83767"/>
        <dbReference type="EC" id="2.3.1.286"/>
    </reaction>
</comment>
<comment type="cofactor">
    <cofactor evidence="1">
        <name>Zn(2+)</name>
        <dbReference type="ChEBI" id="CHEBI:29105"/>
    </cofactor>
    <text evidence="1">Binds 1 zinc ion per subunit.</text>
</comment>
<comment type="subcellular location">
    <subcellularLocation>
        <location evidence="1">Cytoplasm</location>
    </subcellularLocation>
</comment>
<comment type="similarity">
    <text evidence="1">Belongs to the sirtuin family. Class II subfamily.</text>
</comment>
<organism>
    <name type="scientific">Mycobacterium avium (strain 104)</name>
    <dbReference type="NCBI Taxonomy" id="243243"/>
    <lineage>
        <taxon>Bacteria</taxon>
        <taxon>Bacillati</taxon>
        <taxon>Actinomycetota</taxon>
        <taxon>Actinomycetes</taxon>
        <taxon>Mycobacteriales</taxon>
        <taxon>Mycobacteriaceae</taxon>
        <taxon>Mycobacterium</taxon>
        <taxon>Mycobacterium avium complex (MAC)</taxon>
    </lineage>
</organism>
<gene>
    <name evidence="1" type="primary">cobB1</name>
    <name type="ordered locus">MAV_1735</name>
</gene>
<sequence length="282" mass="29899">MTVGRAESPELVAVLAGRRIAVLTGAGISTDSGIPDYRGPESPPSNPMTIRQFTGDPAFRQRYWARNHVGWRHMDDTLPNAGHRALAALEDAAVVTGVITQNVDLLHTKAGSRNVIDLHGSYARVICLGCGDTTSRAALAERLEALNPGFIERTEAIGGLAVAPDADAVVAETASFRYVDCARCAGMLKPDIVYFGESVPKDVVAAAYRLIDESDTLLVAGSSLTVFSGYRFVRHAAARGIPIAIVNRGDTRGDHLATVKVDGGCSELLALLADELSPLPTH</sequence>
<evidence type="ECO:0000255" key="1">
    <source>
        <dbReference type="HAMAP-Rule" id="MF_01967"/>
    </source>
</evidence>
<evidence type="ECO:0000255" key="2">
    <source>
        <dbReference type="PROSITE-ProRule" id="PRU00236"/>
    </source>
</evidence>
<accession>A0QDH4</accession>
<proteinExistence type="inferred from homology"/>
<reference key="1">
    <citation type="submission" date="2006-10" db="EMBL/GenBank/DDBJ databases">
        <authorList>
            <person name="Fleischmann R.D."/>
            <person name="Dodson R.J."/>
            <person name="Haft D.H."/>
            <person name="Merkel J.S."/>
            <person name="Nelson W.C."/>
            <person name="Fraser C.M."/>
        </authorList>
    </citation>
    <scope>NUCLEOTIDE SEQUENCE [LARGE SCALE GENOMIC DNA]</scope>
    <source>
        <strain>104</strain>
    </source>
</reference>
<dbReference type="EC" id="2.3.1.286" evidence="1 2"/>
<dbReference type="EMBL" id="CP000479">
    <property type="protein sequence ID" value="ABK67067.1"/>
    <property type="molecule type" value="Genomic_DNA"/>
</dbReference>
<dbReference type="RefSeq" id="WP_009975979.1">
    <property type="nucleotide sequence ID" value="NC_008595.1"/>
</dbReference>
<dbReference type="SMR" id="A0QDH4"/>
<dbReference type="KEGG" id="mav:MAV_1735"/>
<dbReference type="HOGENOM" id="CLU_023643_3_2_11"/>
<dbReference type="Proteomes" id="UP000001574">
    <property type="component" value="Chromosome"/>
</dbReference>
<dbReference type="GO" id="GO:0005737">
    <property type="term" value="C:cytoplasm"/>
    <property type="evidence" value="ECO:0007669"/>
    <property type="project" value="UniProtKB-SubCell"/>
</dbReference>
<dbReference type="GO" id="GO:0017136">
    <property type="term" value="F:histone deacetylase activity, NAD-dependent"/>
    <property type="evidence" value="ECO:0007669"/>
    <property type="project" value="TreeGrafter"/>
</dbReference>
<dbReference type="GO" id="GO:0070403">
    <property type="term" value="F:NAD+ binding"/>
    <property type="evidence" value="ECO:0007669"/>
    <property type="project" value="UniProtKB-UniRule"/>
</dbReference>
<dbReference type="GO" id="GO:0008270">
    <property type="term" value="F:zinc ion binding"/>
    <property type="evidence" value="ECO:0007669"/>
    <property type="project" value="UniProtKB-UniRule"/>
</dbReference>
<dbReference type="CDD" id="cd01409">
    <property type="entry name" value="SIRT4"/>
    <property type="match status" value="1"/>
</dbReference>
<dbReference type="Gene3D" id="3.30.1600.10">
    <property type="entry name" value="SIR2/SIRT2 'Small Domain"/>
    <property type="match status" value="1"/>
</dbReference>
<dbReference type="Gene3D" id="3.40.50.1220">
    <property type="entry name" value="TPP-binding domain"/>
    <property type="match status" value="1"/>
</dbReference>
<dbReference type="HAMAP" id="MF_01967">
    <property type="entry name" value="Sirtuin_ClassII"/>
    <property type="match status" value="1"/>
</dbReference>
<dbReference type="InterPro" id="IPR029035">
    <property type="entry name" value="DHS-like_NAD/FAD-binding_dom"/>
</dbReference>
<dbReference type="InterPro" id="IPR050134">
    <property type="entry name" value="NAD-dep_sirtuin_deacylases"/>
</dbReference>
<dbReference type="InterPro" id="IPR003000">
    <property type="entry name" value="Sirtuin"/>
</dbReference>
<dbReference type="InterPro" id="IPR026591">
    <property type="entry name" value="Sirtuin_cat_small_dom_sf"/>
</dbReference>
<dbReference type="InterPro" id="IPR026587">
    <property type="entry name" value="Sirtuin_class_II"/>
</dbReference>
<dbReference type="InterPro" id="IPR026590">
    <property type="entry name" value="Ssirtuin_cat_dom"/>
</dbReference>
<dbReference type="PANTHER" id="PTHR11085">
    <property type="entry name" value="NAD-DEPENDENT PROTEIN DEACYLASE SIRTUIN-5, MITOCHONDRIAL-RELATED"/>
    <property type="match status" value="1"/>
</dbReference>
<dbReference type="PANTHER" id="PTHR11085:SF10">
    <property type="entry name" value="NAD-DEPENDENT PROTEIN DEACYLASE SIRTUIN-5, MITOCHONDRIAL-RELATED"/>
    <property type="match status" value="1"/>
</dbReference>
<dbReference type="Pfam" id="PF02146">
    <property type="entry name" value="SIR2"/>
    <property type="match status" value="1"/>
</dbReference>
<dbReference type="SUPFAM" id="SSF52467">
    <property type="entry name" value="DHS-like NAD/FAD-binding domain"/>
    <property type="match status" value="1"/>
</dbReference>
<dbReference type="PROSITE" id="PS50305">
    <property type="entry name" value="SIRTUIN"/>
    <property type="match status" value="1"/>
</dbReference>
<feature type="chain" id="PRO_0000417353" description="NAD-dependent protein deacetylase 1">
    <location>
        <begin position="1"/>
        <end position="282"/>
    </location>
</feature>
<feature type="domain" description="Deacetylase sirtuin-type" evidence="2">
    <location>
        <begin position="1"/>
        <end position="282"/>
    </location>
</feature>
<feature type="active site" description="Proton acceptor" evidence="2">
    <location>
        <position position="119"/>
    </location>
</feature>
<feature type="binding site" evidence="1">
    <location>
        <begin position="25"/>
        <end position="45"/>
    </location>
    <ligand>
        <name>NAD(+)</name>
        <dbReference type="ChEBI" id="CHEBI:57540"/>
    </ligand>
</feature>
<feature type="binding site" evidence="1">
    <location>
        <begin position="101"/>
        <end position="104"/>
    </location>
    <ligand>
        <name>NAD(+)</name>
        <dbReference type="ChEBI" id="CHEBI:57540"/>
    </ligand>
</feature>
<feature type="binding site" evidence="1">
    <location>
        <position position="127"/>
    </location>
    <ligand>
        <name>Zn(2+)</name>
        <dbReference type="ChEBI" id="CHEBI:29105"/>
    </ligand>
</feature>
<feature type="binding site" evidence="1">
    <location>
        <position position="130"/>
    </location>
    <ligand>
        <name>Zn(2+)</name>
        <dbReference type="ChEBI" id="CHEBI:29105"/>
    </ligand>
</feature>
<feature type="binding site" evidence="1">
    <location>
        <position position="181"/>
    </location>
    <ligand>
        <name>Zn(2+)</name>
        <dbReference type="ChEBI" id="CHEBI:29105"/>
    </ligand>
</feature>
<feature type="binding site" evidence="1">
    <location>
        <position position="184"/>
    </location>
    <ligand>
        <name>Zn(2+)</name>
        <dbReference type="ChEBI" id="CHEBI:29105"/>
    </ligand>
</feature>
<feature type="binding site" evidence="1">
    <location>
        <begin position="221"/>
        <end position="223"/>
    </location>
    <ligand>
        <name>NAD(+)</name>
        <dbReference type="ChEBI" id="CHEBI:57540"/>
    </ligand>
</feature>
<feature type="binding site" evidence="1">
    <location>
        <begin position="247"/>
        <end position="249"/>
    </location>
    <ligand>
        <name>NAD(+)</name>
        <dbReference type="ChEBI" id="CHEBI:57540"/>
    </ligand>
</feature>
<feature type="binding site" evidence="1">
    <location>
        <position position="265"/>
    </location>
    <ligand>
        <name>NAD(+)</name>
        <dbReference type="ChEBI" id="CHEBI:57540"/>
    </ligand>
</feature>